<protein>
    <recommendedName>
        <fullName>Choline transporter-like protein 2</fullName>
    </recommendedName>
    <alternativeName>
        <fullName>Solute carrier family 44 member 2</fullName>
    </alternativeName>
</protein>
<sequence>MSSEDLQDHHEIGNEVIKKKGVYTKKKCQDCFFLILFLLFWAGMIVVAAFGVKNGKPDRIVKGTDQYGNICGVNNIEQGILNETQARDTTNEPYVYFIYYPDLIGINYRVICIEECPNSTYTDLNDPNQLICDYGTVPATNQISPNGTCMGKIKSKLIFNRCIPDVTNTSVVLNSIVDEIYQFVNNQLTSDLSVEILTDLTNSWRYLIYGALIAMGLGLTWIFLLRFFAGFITWLTVFAAYACLGLLTAQVYFQWQDSKDAYENTIPSQRLVMQEKNILALKVIFIILCVVCGIFALILLALFSRIRIAIRIIKECSRAIGIMPSIFFFPIFIFLLLCGFTVYWVYIGVYLATAGSPTYDDQYRFTGYEADSKLQKIQIYHFFGYLWTFAFILALNQTTIAGAISSWYWVQDKKDTPFFPVWSSFFRVIRYHLGSIALGSLILAIVQFIRWVLRFLEKKFKGKEAYLARFIVRCLNCIFGCFERFIKFLDKNAYIMVSIYGYSFCQGAKRGFQLVLTNILRVAAVNLVSSFLMFLGRVFITAATVGISLYLLKEHENLSFYIIPVILIGFIAFAISTGFMSVYDMSIDTMLLCFCEDCERNDGSPERPYYMSKSLRKFVDGKGRSKCC</sequence>
<organism>
    <name type="scientific">Dictyostelium discoideum</name>
    <name type="common">Social amoeba</name>
    <dbReference type="NCBI Taxonomy" id="44689"/>
    <lineage>
        <taxon>Eukaryota</taxon>
        <taxon>Amoebozoa</taxon>
        <taxon>Evosea</taxon>
        <taxon>Eumycetozoa</taxon>
        <taxon>Dictyostelia</taxon>
        <taxon>Dictyosteliales</taxon>
        <taxon>Dictyosteliaceae</taxon>
        <taxon>Dictyostelium</taxon>
    </lineage>
</organism>
<reference key="1">
    <citation type="journal article" date="2005" name="Nature">
        <title>The genome of the social amoeba Dictyostelium discoideum.</title>
        <authorList>
            <person name="Eichinger L."/>
            <person name="Pachebat J.A."/>
            <person name="Gloeckner G."/>
            <person name="Rajandream M.A."/>
            <person name="Sucgang R."/>
            <person name="Berriman M."/>
            <person name="Song J."/>
            <person name="Olsen R."/>
            <person name="Szafranski K."/>
            <person name="Xu Q."/>
            <person name="Tunggal B."/>
            <person name="Kummerfeld S."/>
            <person name="Madera M."/>
            <person name="Konfortov B.A."/>
            <person name="Rivero F."/>
            <person name="Bankier A.T."/>
            <person name="Lehmann R."/>
            <person name="Hamlin N."/>
            <person name="Davies R."/>
            <person name="Gaudet P."/>
            <person name="Fey P."/>
            <person name="Pilcher K."/>
            <person name="Chen G."/>
            <person name="Saunders D."/>
            <person name="Sodergren E.J."/>
            <person name="Davis P."/>
            <person name="Kerhornou A."/>
            <person name="Nie X."/>
            <person name="Hall N."/>
            <person name="Anjard C."/>
            <person name="Hemphill L."/>
            <person name="Bason N."/>
            <person name="Farbrother P."/>
            <person name="Desany B."/>
            <person name="Just E."/>
            <person name="Morio T."/>
            <person name="Rost R."/>
            <person name="Churcher C.M."/>
            <person name="Cooper J."/>
            <person name="Haydock S."/>
            <person name="van Driessche N."/>
            <person name="Cronin A."/>
            <person name="Goodhead I."/>
            <person name="Muzny D.M."/>
            <person name="Mourier T."/>
            <person name="Pain A."/>
            <person name="Lu M."/>
            <person name="Harper D."/>
            <person name="Lindsay R."/>
            <person name="Hauser H."/>
            <person name="James K.D."/>
            <person name="Quiles M."/>
            <person name="Madan Babu M."/>
            <person name="Saito T."/>
            <person name="Buchrieser C."/>
            <person name="Wardroper A."/>
            <person name="Felder M."/>
            <person name="Thangavelu M."/>
            <person name="Johnson D."/>
            <person name="Knights A."/>
            <person name="Loulseged H."/>
            <person name="Mungall K.L."/>
            <person name="Oliver K."/>
            <person name="Price C."/>
            <person name="Quail M.A."/>
            <person name="Urushihara H."/>
            <person name="Hernandez J."/>
            <person name="Rabbinowitsch E."/>
            <person name="Steffen D."/>
            <person name="Sanders M."/>
            <person name="Ma J."/>
            <person name="Kohara Y."/>
            <person name="Sharp S."/>
            <person name="Simmonds M.N."/>
            <person name="Spiegler S."/>
            <person name="Tivey A."/>
            <person name="Sugano S."/>
            <person name="White B."/>
            <person name="Walker D."/>
            <person name="Woodward J.R."/>
            <person name="Winckler T."/>
            <person name="Tanaka Y."/>
            <person name="Shaulsky G."/>
            <person name="Schleicher M."/>
            <person name="Weinstock G.M."/>
            <person name="Rosenthal A."/>
            <person name="Cox E.C."/>
            <person name="Chisholm R.L."/>
            <person name="Gibbs R.A."/>
            <person name="Loomis W.F."/>
            <person name="Platzer M."/>
            <person name="Kay R.R."/>
            <person name="Williams J.G."/>
            <person name="Dear P.H."/>
            <person name="Noegel A.A."/>
            <person name="Barrell B.G."/>
            <person name="Kuspa A."/>
        </authorList>
    </citation>
    <scope>NUCLEOTIDE SEQUENCE [LARGE SCALE GENOMIC DNA]</scope>
    <source>
        <strain>AX4</strain>
    </source>
</reference>
<comment type="function">
    <text evidence="2">Choline/H+ antiporter, mainly in mitochodria. Also acts as a low-affinity ethanolamine/H+ antiporter, regulating the supply of extracellular ethanolamine (Etn) for the CDP-Etn pathway, redistribute intracellular Etn and balance the CDP-Cho and CDP-Etn arms of the Kennedy pathway.</text>
</comment>
<comment type="catalytic activity">
    <reaction evidence="2">
        <text>choline(out) + n H(+)(in) = choline(in) + n H(+)(out)</text>
        <dbReference type="Rhea" id="RHEA:75463"/>
        <dbReference type="ChEBI" id="CHEBI:15354"/>
        <dbReference type="ChEBI" id="CHEBI:15378"/>
    </reaction>
</comment>
<comment type="catalytic activity">
    <reaction evidence="2">
        <text>ethanolamine(out) + n H(+)(in) = ethanolamine(in) + n H(+)(out)</text>
        <dbReference type="Rhea" id="RHEA:75467"/>
        <dbReference type="ChEBI" id="CHEBI:15378"/>
        <dbReference type="ChEBI" id="CHEBI:57603"/>
    </reaction>
</comment>
<comment type="subcellular location">
    <subcellularLocation>
        <location evidence="2">Cell membrane</location>
        <topology evidence="3">Multi-pass membrane protein</topology>
    </subcellularLocation>
    <subcellularLocation>
        <location evidence="2">Mitochondrion outer membrane</location>
        <topology evidence="3">Multi-pass membrane protein</topology>
    </subcellularLocation>
    <text evidence="1">Mainly expressed in mitochondria.</text>
</comment>
<comment type="similarity">
    <text evidence="4">Belongs to the CTL (choline transporter-like) family.</text>
</comment>
<proteinExistence type="inferred from homology"/>
<accession>Q54I48</accession>
<gene>
    <name type="primary">slc44a2</name>
    <name type="synonym">ctl2</name>
    <name type="ORF">DDB_G0289013</name>
</gene>
<feature type="chain" id="PRO_0000327935" description="Choline transporter-like protein 2">
    <location>
        <begin position="1"/>
        <end position="628"/>
    </location>
</feature>
<feature type="topological domain" description="Cytoplasmic" evidence="3">
    <location>
        <begin position="1"/>
        <end position="31"/>
    </location>
</feature>
<feature type="transmembrane region" description="Helical" evidence="3">
    <location>
        <begin position="32"/>
        <end position="52"/>
    </location>
</feature>
<feature type="topological domain" description="Extracellular" evidence="3">
    <location>
        <begin position="53"/>
        <end position="204"/>
    </location>
</feature>
<feature type="transmembrane region" description="Helical" evidence="3">
    <location>
        <begin position="205"/>
        <end position="225"/>
    </location>
</feature>
<feature type="topological domain" description="Cytoplasmic" evidence="3">
    <location>
        <position position="226"/>
    </location>
</feature>
<feature type="transmembrane region" description="Helical" evidence="3">
    <location>
        <begin position="227"/>
        <end position="247"/>
    </location>
</feature>
<feature type="topological domain" description="Extracellular" evidence="3">
    <location>
        <begin position="248"/>
        <end position="282"/>
    </location>
</feature>
<feature type="transmembrane region" description="Helical" evidence="3">
    <location>
        <begin position="283"/>
        <end position="303"/>
    </location>
</feature>
<feature type="topological domain" description="Cytoplasmic" evidence="3">
    <location>
        <begin position="304"/>
        <end position="319"/>
    </location>
</feature>
<feature type="transmembrane region" description="Helical" evidence="3">
    <location>
        <begin position="320"/>
        <end position="340"/>
    </location>
</feature>
<feature type="topological domain" description="Extracellular" evidence="3">
    <location>
        <begin position="341"/>
        <end position="381"/>
    </location>
</feature>
<feature type="transmembrane region" description="Helical" evidence="3">
    <location>
        <begin position="382"/>
        <end position="402"/>
    </location>
</feature>
<feature type="topological domain" description="Cytoplasmic" evidence="3">
    <location>
        <begin position="403"/>
        <end position="432"/>
    </location>
</feature>
<feature type="transmembrane region" description="Helical" evidence="3">
    <location>
        <begin position="433"/>
        <end position="453"/>
    </location>
</feature>
<feature type="topological domain" description="Extracellular" evidence="3">
    <location>
        <begin position="454"/>
        <end position="530"/>
    </location>
</feature>
<feature type="transmembrane region" description="Helical" evidence="3">
    <location>
        <begin position="531"/>
        <end position="551"/>
    </location>
</feature>
<feature type="topological domain" description="Cytoplasmic" evidence="3">
    <location>
        <begin position="552"/>
        <end position="559"/>
    </location>
</feature>
<feature type="transmembrane region" description="Helical" evidence="3">
    <location>
        <begin position="560"/>
        <end position="580"/>
    </location>
</feature>
<feature type="topological domain" description="Extracellular" evidence="3">
    <location>
        <begin position="581"/>
        <end position="628"/>
    </location>
</feature>
<feature type="glycosylation site" description="N-linked (GlcNAc...) asparagine" evidence="3">
    <location>
        <position position="82"/>
    </location>
</feature>
<feature type="glycosylation site" description="N-linked (GlcNAc...) asparagine" evidence="3">
    <location>
        <position position="118"/>
    </location>
</feature>
<feature type="glycosylation site" description="N-linked (GlcNAc...) asparagine" evidence="3">
    <location>
        <position position="146"/>
    </location>
</feature>
<feature type="glycosylation site" description="N-linked (GlcNAc...) asparagine" evidence="3">
    <location>
        <position position="168"/>
    </location>
</feature>
<dbReference type="EMBL" id="AAFI02000129">
    <property type="protein sequence ID" value="EAL62922.1"/>
    <property type="molecule type" value="Genomic_DNA"/>
</dbReference>
<dbReference type="RefSeq" id="XP_636423.1">
    <property type="nucleotide sequence ID" value="XM_631331.1"/>
</dbReference>
<dbReference type="SMR" id="Q54I48"/>
<dbReference type="FunCoup" id="Q54I48">
    <property type="interactions" value="48"/>
</dbReference>
<dbReference type="STRING" id="44689.Q54I48"/>
<dbReference type="GlyCosmos" id="Q54I48">
    <property type="glycosylation" value="4 sites, No reported glycans"/>
</dbReference>
<dbReference type="GlyGen" id="Q54I48">
    <property type="glycosylation" value="4 sites"/>
</dbReference>
<dbReference type="PaxDb" id="44689-DDB0266389"/>
<dbReference type="EnsemblProtists" id="EAL62922">
    <property type="protein sequence ID" value="EAL62922"/>
    <property type="gene ID" value="DDB_G0289013"/>
</dbReference>
<dbReference type="GeneID" id="8626914"/>
<dbReference type="KEGG" id="ddi:DDB_G0289013"/>
<dbReference type="dictyBase" id="DDB_G0289013">
    <property type="gene designation" value="slc44a2"/>
</dbReference>
<dbReference type="VEuPathDB" id="AmoebaDB:DDB_G0289013"/>
<dbReference type="eggNOG" id="KOG1362">
    <property type="taxonomic scope" value="Eukaryota"/>
</dbReference>
<dbReference type="HOGENOM" id="CLU_017181_3_1_1"/>
<dbReference type="InParanoid" id="Q54I48"/>
<dbReference type="OMA" id="GKSFCKA"/>
<dbReference type="PhylomeDB" id="Q54I48"/>
<dbReference type="Reactome" id="R-DDI-1483191">
    <property type="pathway name" value="Synthesis of PC"/>
</dbReference>
<dbReference type="Reactome" id="R-DDI-425366">
    <property type="pathway name" value="Transport of bile salts and organic acids, metal ions and amine compounds"/>
</dbReference>
<dbReference type="Reactome" id="R-DDI-6798163">
    <property type="pathway name" value="Choline catabolism"/>
</dbReference>
<dbReference type="Reactome" id="R-DDI-6798695">
    <property type="pathway name" value="Neutrophil degranulation"/>
</dbReference>
<dbReference type="PRO" id="PR:Q54I48"/>
<dbReference type="Proteomes" id="UP000002195">
    <property type="component" value="Chromosome 5"/>
</dbReference>
<dbReference type="GO" id="GO:0016020">
    <property type="term" value="C:membrane"/>
    <property type="evidence" value="ECO:0000318"/>
    <property type="project" value="GO_Central"/>
</dbReference>
<dbReference type="GO" id="GO:0005741">
    <property type="term" value="C:mitochondrial outer membrane"/>
    <property type="evidence" value="ECO:0000250"/>
    <property type="project" value="UniProtKB"/>
</dbReference>
<dbReference type="GO" id="GO:0005886">
    <property type="term" value="C:plasma membrane"/>
    <property type="evidence" value="ECO:0000250"/>
    <property type="project" value="UniProtKB"/>
</dbReference>
<dbReference type="GO" id="GO:0015297">
    <property type="term" value="F:antiporter activity"/>
    <property type="evidence" value="ECO:0007669"/>
    <property type="project" value="UniProtKB-KW"/>
</dbReference>
<dbReference type="GO" id="GO:0015220">
    <property type="term" value="F:choline transmembrane transporter activity"/>
    <property type="evidence" value="ECO:0000250"/>
    <property type="project" value="UniProtKB"/>
</dbReference>
<dbReference type="GO" id="GO:0034228">
    <property type="term" value="F:ethanolamine transmembrane transporter activity"/>
    <property type="evidence" value="ECO:0000250"/>
    <property type="project" value="UniProtKB"/>
</dbReference>
<dbReference type="GO" id="GO:0022857">
    <property type="term" value="F:transmembrane transporter activity"/>
    <property type="evidence" value="ECO:0000318"/>
    <property type="project" value="GO_Central"/>
</dbReference>
<dbReference type="GO" id="GO:0015871">
    <property type="term" value="P:choline transport"/>
    <property type="evidence" value="ECO:0000250"/>
    <property type="project" value="UniProtKB"/>
</dbReference>
<dbReference type="GO" id="GO:0034229">
    <property type="term" value="P:ethanolamine transport"/>
    <property type="evidence" value="ECO:0000250"/>
    <property type="project" value="UniProtKB"/>
</dbReference>
<dbReference type="GO" id="GO:0055085">
    <property type="term" value="P:transmembrane transport"/>
    <property type="evidence" value="ECO:0000318"/>
    <property type="project" value="GO_Central"/>
</dbReference>
<dbReference type="InterPro" id="IPR007603">
    <property type="entry name" value="Choline_transptr-like"/>
</dbReference>
<dbReference type="PANTHER" id="PTHR12385">
    <property type="entry name" value="CHOLINE TRANSPORTER-LIKE (SLC FAMILY 44)"/>
    <property type="match status" value="1"/>
</dbReference>
<dbReference type="PANTHER" id="PTHR12385:SF101">
    <property type="entry name" value="CHOLINE TRANSPORTER-LIKE PROTEIN 2"/>
    <property type="match status" value="1"/>
</dbReference>
<dbReference type="Pfam" id="PF04515">
    <property type="entry name" value="Choline_transpo"/>
    <property type="match status" value="1"/>
</dbReference>
<evidence type="ECO:0000250" key="1">
    <source>
        <dbReference type="UniProtKB" id="B4F795"/>
    </source>
</evidence>
<evidence type="ECO:0000250" key="2">
    <source>
        <dbReference type="UniProtKB" id="Q8IWA5"/>
    </source>
</evidence>
<evidence type="ECO:0000255" key="3"/>
<evidence type="ECO:0000305" key="4"/>
<keyword id="KW-0050">Antiport</keyword>
<keyword id="KW-1003">Cell membrane</keyword>
<keyword id="KW-0325">Glycoprotein</keyword>
<keyword id="KW-0472">Membrane</keyword>
<keyword id="KW-0496">Mitochondrion</keyword>
<keyword id="KW-1000">Mitochondrion outer membrane</keyword>
<keyword id="KW-0597">Phosphoprotein</keyword>
<keyword id="KW-1185">Reference proteome</keyword>
<keyword id="KW-0812">Transmembrane</keyword>
<keyword id="KW-1133">Transmembrane helix</keyword>
<keyword id="KW-0813">Transport</keyword>
<name>CTL2_DICDI</name>